<organism>
    <name type="scientific">Escherichia coli O127:H6 (strain E2348/69 / EPEC)</name>
    <dbReference type="NCBI Taxonomy" id="574521"/>
    <lineage>
        <taxon>Bacteria</taxon>
        <taxon>Pseudomonadati</taxon>
        <taxon>Pseudomonadota</taxon>
        <taxon>Gammaproteobacteria</taxon>
        <taxon>Enterobacterales</taxon>
        <taxon>Enterobacteriaceae</taxon>
        <taxon>Escherichia</taxon>
    </lineage>
</organism>
<name>RL22_ECO27</name>
<accession>B7UK39</accession>
<proteinExistence type="inferred from homology"/>
<protein>
    <recommendedName>
        <fullName evidence="1">Large ribosomal subunit protein uL22</fullName>
    </recommendedName>
    <alternativeName>
        <fullName evidence="2">50S ribosomal protein L22</fullName>
    </alternativeName>
</protein>
<sequence>METIAKHRHARSSAQKVRLVADLIRGKKVSQALDILTYTNKKAAVLVKKVLESAIANAEHNDGADIDDLKVTKIFVDEGPSMKRIMPRAKGRADRILKRTSHITVVVSDR</sequence>
<keyword id="KW-1185">Reference proteome</keyword>
<keyword id="KW-0687">Ribonucleoprotein</keyword>
<keyword id="KW-0689">Ribosomal protein</keyword>
<keyword id="KW-0694">RNA-binding</keyword>
<keyword id="KW-0699">rRNA-binding</keyword>
<reference key="1">
    <citation type="journal article" date="2009" name="J. Bacteriol.">
        <title>Complete genome sequence and comparative genome analysis of enteropathogenic Escherichia coli O127:H6 strain E2348/69.</title>
        <authorList>
            <person name="Iguchi A."/>
            <person name="Thomson N.R."/>
            <person name="Ogura Y."/>
            <person name="Saunders D."/>
            <person name="Ooka T."/>
            <person name="Henderson I.R."/>
            <person name="Harris D."/>
            <person name="Asadulghani M."/>
            <person name="Kurokawa K."/>
            <person name="Dean P."/>
            <person name="Kenny B."/>
            <person name="Quail M.A."/>
            <person name="Thurston S."/>
            <person name="Dougan G."/>
            <person name="Hayashi T."/>
            <person name="Parkhill J."/>
            <person name="Frankel G."/>
        </authorList>
    </citation>
    <scope>NUCLEOTIDE SEQUENCE [LARGE SCALE GENOMIC DNA]</scope>
    <source>
        <strain>E2348/69 / EPEC</strain>
    </source>
</reference>
<gene>
    <name evidence="1" type="primary">rplV</name>
    <name type="ordered locus">E2348C_3578</name>
</gene>
<comment type="function">
    <text evidence="1">This protein binds specifically to 23S rRNA; its binding is stimulated by other ribosomal proteins, e.g. L4, L17, and L20. It is important during the early stages of 50S assembly. It makes multiple contacts with different domains of the 23S rRNA in the assembled 50S subunit and ribosome (By similarity).</text>
</comment>
<comment type="function">
    <text evidence="1">The globular domain of the protein is located near the polypeptide exit tunnel on the outside of the subunit, while an extended beta-hairpin is found that lines the wall of the exit tunnel in the center of the 70S ribosome.</text>
</comment>
<comment type="subunit">
    <text evidence="1">Part of the 50S ribosomal subunit.</text>
</comment>
<comment type="similarity">
    <text evidence="1">Belongs to the universal ribosomal protein uL22 family.</text>
</comment>
<feature type="chain" id="PRO_1000166060" description="Large ribosomal subunit protein uL22">
    <location>
        <begin position="1"/>
        <end position="110"/>
    </location>
</feature>
<evidence type="ECO:0000255" key="1">
    <source>
        <dbReference type="HAMAP-Rule" id="MF_01331"/>
    </source>
</evidence>
<evidence type="ECO:0000305" key="2"/>
<dbReference type="EMBL" id="FM180568">
    <property type="protein sequence ID" value="CAS11126.1"/>
    <property type="molecule type" value="Genomic_DNA"/>
</dbReference>
<dbReference type="RefSeq" id="WP_000447529.1">
    <property type="nucleotide sequence ID" value="NC_011601.1"/>
</dbReference>
<dbReference type="SMR" id="B7UK39"/>
<dbReference type="GeneID" id="93778672"/>
<dbReference type="KEGG" id="ecg:E2348C_3578"/>
<dbReference type="HOGENOM" id="CLU_083987_3_3_6"/>
<dbReference type="Proteomes" id="UP000008205">
    <property type="component" value="Chromosome"/>
</dbReference>
<dbReference type="GO" id="GO:0022625">
    <property type="term" value="C:cytosolic large ribosomal subunit"/>
    <property type="evidence" value="ECO:0007669"/>
    <property type="project" value="TreeGrafter"/>
</dbReference>
<dbReference type="GO" id="GO:0019843">
    <property type="term" value="F:rRNA binding"/>
    <property type="evidence" value="ECO:0007669"/>
    <property type="project" value="UniProtKB-UniRule"/>
</dbReference>
<dbReference type="GO" id="GO:0003735">
    <property type="term" value="F:structural constituent of ribosome"/>
    <property type="evidence" value="ECO:0007669"/>
    <property type="project" value="InterPro"/>
</dbReference>
<dbReference type="GO" id="GO:0006412">
    <property type="term" value="P:translation"/>
    <property type="evidence" value="ECO:0007669"/>
    <property type="project" value="UniProtKB-UniRule"/>
</dbReference>
<dbReference type="CDD" id="cd00336">
    <property type="entry name" value="Ribosomal_L22"/>
    <property type="match status" value="1"/>
</dbReference>
<dbReference type="FunFam" id="3.90.470.10:FF:000001">
    <property type="entry name" value="50S ribosomal protein L22"/>
    <property type="match status" value="1"/>
</dbReference>
<dbReference type="Gene3D" id="3.90.470.10">
    <property type="entry name" value="Ribosomal protein L22/L17"/>
    <property type="match status" value="1"/>
</dbReference>
<dbReference type="HAMAP" id="MF_01331_B">
    <property type="entry name" value="Ribosomal_uL22_B"/>
    <property type="match status" value="1"/>
</dbReference>
<dbReference type="InterPro" id="IPR001063">
    <property type="entry name" value="Ribosomal_uL22"/>
</dbReference>
<dbReference type="InterPro" id="IPR005727">
    <property type="entry name" value="Ribosomal_uL22_bac/chlpt-type"/>
</dbReference>
<dbReference type="InterPro" id="IPR047867">
    <property type="entry name" value="Ribosomal_uL22_bac/org-type"/>
</dbReference>
<dbReference type="InterPro" id="IPR018260">
    <property type="entry name" value="Ribosomal_uL22_CS"/>
</dbReference>
<dbReference type="InterPro" id="IPR036394">
    <property type="entry name" value="Ribosomal_uL22_sf"/>
</dbReference>
<dbReference type="NCBIfam" id="TIGR01044">
    <property type="entry name" value="rplV_bact"/>
    <property type="match status" value="1"/>
</dbReference>
<dbReference type="PANTHER" id="PTHR13501">
    <property type="entry name" value="CHLOROPLAST 50S RIBOSOMAL PROTEIN L22-RELATED"/>
    <property type="match status" value="1"/>
</dbReference>
<dbReference type="PANTHER" id="PTHR13501:SF8">
    <property type="entry name" value="LARGE RIBOSOMAL SUBUNIT PROTEIN UL22M"/>
    <property type="match status" value="1"/>
</dbReference>
<dbReference type="Pfam" id="PF00237">
    <property type="entry name" value="Ribosomal_L22"/>
    <property type="match status" value="1"/>
</dbReference>
<dbReference type="SUPFAM" id="SSF54843">
    <property type="entry name" value="Ribosomal protein L22"/>
    <property type="match status" value="1"/>
</dbReference>
<dbReference type="PROSITE" id="PS00464">
    <property type="entry name" value="RIBOSOMAL_L22"/>
    <property type="match status" value="1"/>
</dbReference>